<accession>A3NNW7</accession>
<gene>
    <name type="primary">acyP</name>
    <name type="ordered locus">BURPS668_A3047</name>
</gene>
<protein>
    <recommendedName>
        <fullName>Acylphosphatase</fullName>
        <ecNumber>3.6.1.7</ecNumber>
    </recommendedName>
    <alternativeName>
        <fullName>Acylphosphate phosphohydrolase</fullName>
    </alternativeName>
</protein>
<name>ACYP_BURP6</name>
<keyword id="KW-0378">Hydrolase</keyword>
<reference key="1">
    <citation type="journal article" date="2010" name="Genome Biol. Evol.">
        <title>Continuing evolution of Burkholderia mallei through genome reduction and large-scale rearrangements.</title>
        <authorList>
            <person name="Losada L."/>
            <person name="Ronning C.M."/>
            <person name="DeShazer D."/>
            <person name="Woods D."/>
            <person name="Fedorova N."/>
            <person name="Kim H.S."/>
            <person name="Shabalina S.A."/>
            <person name="Pearson T.R."/>
            <person name="Brinkac L."/>
            <person name="Tan P."/>
            <person name="Nandi T."/>
            <person name="Crabtree J."/>
            <person name="Badger J."/>
            <person name="Beckstrom-Sternberg S."/>
            <person name="Saqib M."/>
            <person name="Schutzer S.E."/>
            <person name="Keim P."/>
            <person name="Nierman W.C."/>
        </authorList>
    </citation>
    <scope>NUCLEOTIDE SEQUENCE [LARGE SCALE GENOMIC DNA]</scope>
    <source>
        <strain>668</strain>
    </source>
</reference>
<feature type="chain" id="PRO_0000326674" description="Acylphosphatase">
    <location>
        <begin position="1"/>
        <end position="98"/>
    </location>
</feature>
<feature type="domain" description="Acylphosphatase-like" evidence="1">
    <location>
        <begin position="12"/>
        <end position="98"/>
    </location>
</feature>
<feature type="active site" evidence="1">
    <location>
        <position position="27"/>
    </location>
</feature>
<feature type="active site" evidence="1">
    <location>
        <position position="45"/>
    </location>
</feature>
<evidence type="ECO:0000255" key="1">
    <source>
        <dbReference type="PROSITE-ProRule" id="PRU00520"/>
    </source>
</evidence>
<evidence type="ECO:0000305" key="2"/>
<sequence length="98" mass="11254">MSGDDLDERIETYYVRVRGVVQGVGFRHATVREAHALKLRGWVANLDDGSVEAMLQGSAPQIDRMLAWLRHGPPAAHVTEVTFEEHRTDKRFERFQQH</sequence>
<dbReference type="EC" id="3.6.1.7"/>
<dbReference type="EMBL" id="CP000571">
    <property type="protein sequence ID" value="ABN85912.1"/>
    <property type="status" value="ALT_INIT"/>
    <property type="molecule type" value="Genomic_DNA"/>
</dbReference>
<dbReference type="RefSeq" id="WP_004187760.1">
    <property type="nucleotide sequence ID" value="NC_009075.1"/>
</dbReference>
<dbReference type="SMR" id="A3NNW7"/>
<dbReference type="KEGG" id="bpd:BURPS668_A3047"/>
<dbReference type="HOGENOM" id="CLU_1746217_0_0_4"/>
<dbReference type="GO" id="GO:0003998">
    <property type="term" value="F:acylphosphatase activity"/>
    <property type="evidence" value="ECO:0007669"/>
    <property type="project" value="UniProtKB-EC"/>
</dbReference>
<dbReference type="Gene3D" id="3.30.70.100">
    <property type="match status" value="1"/>
</dbReference>
<dbReference type="InterPro" id="IPR020456">
    <property type="entry name" value="Acylphosphatase"/>
</dbReference>
<dbReference type="InterPro" id="IPR001792">
    <property type="entry name" value="Acylphosphatase-like_dom"/>
</dbReference>
<dbReference type="InterPro" id="IPR036046">
    <property type="entry name" value="Acylphosphatase-like_dom_sf"/>
</dbReference>
<dbReference type="InterPro" id="IPR017968">
    <property type="entry name" value="Acylphosphatase_CS"/>
</dbReference>
<dbReference type="NCBIfam" id="NF010998">
    <property type="entry name" value="PRK14424.1"/>
    <property type="match status" value="1"/>
</dbReference>
<dbReference type="PANTHER" id="PTHR47268">
    <property type="entry name" value="ACYLPHOSPHATASE"/>
    <property type="match status" value="1"/>
</dbReference>
<dbReference type="PANTHER" id="PTHR47268:SF4">
    <property type="entry name" value="ACYLPHOSPHATASE"/>
    <property type="match status" value="1"/>
</dbReference>
<dbReference type="Pfam" id="PF00708">
    <property type="entry name" value="Acylphosphatase"/>
    <property type="match status" value="1"/>
</dbReference>
<dbReference type="PRINTS" id="PR00112">
    <property type="entry name" value="ACYLPHPHTASE"/>
</dbReference>
<dbReference type="SUPFAM" id="SSF54975">
    <property type="entry name" value="Acylphosphatase/BLUF domain-like"/>
    <property type="match status" value="1"/>
</dbReference>
<dbReference type="PROSITE" id="PS00150">
    <property type="entry name" value="ACYLPHOSPHATASE_1"/>
    <property type="match status" value="1"/>
</dbReference>
<dbReference type="PROSITE" id="PS00151">
    <property type="entry name" value="ACYLPHOSPHATASE_2"/>
    <property type="match status" value="1"/>
</dbReference>
<dbReference type="PROSITE" id="PS51160">
    <property type="entry name" value="ACYLPHOSPHATASE_3"/>
    <property type="match status" value="1"/>
</dbReference>
<organism>
    <name type="scientific">Burkholderia pseudomallei (strain 668)</name>
    <dbReference type="NCBI Taxonomy" id="320373"/>
    <lineage>
        <taxon>Bacteria</taxon>
        <taxon>Pseudomonadati</taxon>
        <taxon>Pseudomonadota</taxon>
        <taxon>Betaproteobacteria</taxon>
        <taxon>Burkholderiales</taxon>
        <taxon>Burkholderiaceae</taxon>
        <taxon>Burkholderia</taxon>
        <taxon>pseudomallei group</taxon>
    </lineage>
</organism>
<proteinExistence type="inferred from homology"/>
<comment type="catalytic activity">
    <reaction>
        <text>an acyl phosphate + H2O = a carboxylate + phosphate + H(+)</text>
        <dbReference type="Rhea" id="RHEA:14965"/>
        <dbReference type="ChEBI" id="CHEBI:15377"/>
        <dbReference type="ChEBI" id="CHEBI:15378"/>
        <dbReference type="ChEBI" id="CHEBI:29067"/>
        <dbReference type="ChEBI" id="CHEBI:43474"/>
        <dbReference type="ChEBI" id="CHEBI:59918"/>
        <dbReference type="EC" id="3.6.1.7"/>
    </reaction>
</comment>
<comment type="similarity">
    <text evidence="2">Belongs to the acylphosphatase family.</text>
</comment>
<comment type="sequence caution" evidence="2">
    <conflict type="erroneous initiation">
        <sequence resource="EMBL-CDS" id="ABN85912"/>
    </conflict>
</comment>